<keyword id="KW-0067">ATP-binding</keyword>
<keyword id="KW-0150">Chloroplast</keyword>
<keyword id="KW-0275">Fatty acid biosynthesis</keyword>
<keyword id="KW-0276">Fatty acid metabolism</keyword>
<keyword id="KW-0444">Lipid biosynthesis</keyword>
<keyword id="KW-0443">Lipid metabolism</keyword>
<keyword id="KW-0479">Metal-binding</keyword>
<keyword id="KW-0547">Nucleotide-binding</keyword>
<keyword id="KW-0934">Plastid</keyword>
<keyword id="KW-1185">Reference proteome</keyword>
<keyword id="KW-0808">Transferase</keyword>
<keyword id="KW-0862">Zinc</keyword>
<keyword id="KW-0863">Zinc-finger</keyword>
<comment type="function">
    <text evidence="2">Component of the acetyl coenzyme A carboxylase (ACC) complex. Biotin carboxylase (BC) catalyzes the carboxylation of biotin on its carrier protein (BCCP) and then the CO(2) group is transferred by the transcarboxylase to acetyl-CoA to form malonyl-CoA.</text>
</comment>
<comment type="catalytic activity">
    <reaction evidence="2">
        <text>N(6)-carboxybiotinyl-L-lysyl-[protein] + acetyl-CoA = N(6)-biotinyl-L-lysyl-[protein] + malonyl-CoA</text>
        <dbReference type="Rhea" id="RHEA:54728"/>
        <dbReference type="Rhea" id="RHEA-COMP:10505"/>
        <dbReference type="Rhea" id="RHEA-COMP:10506"/>
        <dbReference type="ChEBI" id="CHEBI:57288"/>
        <dbReference type="ChEBI" id="CHEBI:57384"/>
        <dbReference type="ChEBI" id="CHEBI:83144"/>
        <dbReference type="ChEBI" id="CHEBI:83145"/>
        <dbReference type="EC" id="2.1.3.15"/>
    </reaction>
</comment>
<comment type="cofactor">
    <cofactor evidence="2">
        <name>Zn(2+)</name>
        <dbReference type="ChEBI" id="CHEBI:29105"/>
    </cofactor>
    <text evidence="2">Binds 1 zinc ion per subunit.</text>
</comment>
<comment type="pathway">
    <text evidence="2">Lipid metabolism; malonyl-CoA biosynthesis; malonyl-CoA from acetyl-CoA: step 1/1.</text>
</comment>
<comment type="subunit">
    <text evidence="1">Acetyl-CoA carboxylase is a heterohexamer composed of biotin carboxyl carrier protein, biotin carboxylase and 2 subunits each of ACCase subunit alpha and ACCase plastid-coded subunit beta (accD).</text>
</comment>
<comment type="subcellular location">
    <subcellularLocation>
        <location evidence="2">Plastid</location>
        <location evidence="2">Chloroplast stroma</location>
    </subcellularLocation>
</comment>
<comment type="similarity">
    <text evidence="2">Belongs to the AccD/PCCB family.</text>
</comment>
<reference key="1">
    <citation type="journal article" date="1992" name="Curr. Genet.">
        <title>The plastome-encoded zfpA gene of a moss contains procaryotic as well as eucaryotic promoter consensus sequences and its RNA abundance is modulated by cytokinin.</title>
        <authorList>
            <person name="Kasten B."/>
            <person name="Wehe M."/>
            <person name="Kruse S."/>
            <person name="Reutter K."/>
            <person name="Abel W.O."/>
            <person name="Reski R."/>
        </authorList>
    </citation>
    <scope>NUCLEOTIDE SEQUENCE [GENOMIC DNA]</scope>
</reference>
<reference key="2">
    <citation type="submission" date="2001-07" db="EMBL/GenBank/DDBJ databases">
        <title>Physcomitrella patens chloroplast genes.</title>
        <authorList>
            <person name="Sugita M."/>
            <person name="Sugiura C."/>
        </authorList>
    </citation>
    <scope>NUCLEOTIDE SEQUENCE [GENOMIC DNA]</scope>
    <source>
        <tissue>Protonema</tissue>
    </source>
</reference>
<reference key="3">
    <citation type="journal article" date="2003" name="Nucleic Acids Res.">
        <title>Complete chloroplast DNA sequence of the moss Physcomitrella patens: evidence for the loss and relocation of rpoA from the chloroplast to the nucleus.</title>
        <authorList>
            <person name="Sugiura C."/>
            <person name="Kobayashi Y."/>
            <person name="Setsuyuki A."/>
            <person name="Sugita C."/>
            <person name="Sugita M."/>
        </authorList>
    </citation>
    <scope>NUCLEOTIDE SEQUENCE [LARGE SCALE GENOMIC DNA]</scope>
    <source>
        <strain>cv. Gransden 2004</strain>
    </source>
</reference>
<evidence type="ECO:0000250" key="1"/>
<evidence type="ECO:0000255" key="2">
    <source>
        <dbReference type="HAMAP-Rule" id="MF_01395"/>
    </source>
</evidence>
<evidence type="ECO:0000255" key="3">
    <source>
        <dbReference type="PROSITE-ProRule" id="PRU01136"/>
    </source>
</evidence>
<organism>
    <name type="scientific">Physcomitrium patens</name>
    <name type="common">Spreading-leaved earth moss</name>
    <name type="synonym">Physcomitrella patens</name>
    <dbReference type="NCBI Taxonomy" id="3218"/>
    <lineage>
        <taxon>Eukaryota</taxon>
        <taxon>Viridiplantae</taxon>
        <taxon>Streptophyta</taxon>
        <taxon>Embryophyta</taxon>
        <taxon>Bryophyta</taxon>
        <taxon>Bryophytina</taxon>
        <taxon>Bryopsida</taxon>
        <taxon>Funariidae</taxon>
        <taxon>Funariales</taxon>
        <taxon>Funariaceae</taxon>
        <taxon>Physcomitrium</taxon>
    </lineage>
</organism>
<accession>Q00761</accession>
<protein>
    <recommendedName>
        <fullName evidence="2">Acetyl-coenzyme A carboxylase carboxyl transferase subunit beta, chloroplastic</fullName>
        <shortName evidence="2">ACCase subunit beta</shortName>
        <shortName evidence="2">Acetyl-CoA carboxylase carboxyltransferase subunit beta</shortName>
        <ecNumber evidence="2">2.1.3.15</ecNumber>
    </recommendedName>
</protein>
<geneLocation type="chloroplast"/>
<feature type="chain" id="PRO_0000199790" description="Acetyl-coenzyme A carboxylase carboxyl transferase subunit beta, chloroplastic">
    <location>
        <begin position="1"/>
        <end position="315"/>
    </location>
</feature>
<feature type="domain" description="CoA carboxyltransferase N-terminal" evidence="3">
    <location>
        <begin position="47"/>
        <end position="315"/>
    </location>
</feature>
<feature type="zinc finger region" description="C4-type" evidence="2">
    <location>
        <begin position="51"/>
        <end position="73"/>
    </location>
</feature>
<feature type="binding site" evidence="2">
    <location>
        <position position="51"/>
    </location>
    <ligand>
        <name>Zn(2+)</name>
        <dbReference type="ChEBI" id="CHEBI:29105"/>
    </ligand>
</feature>
<feature type="binding site" evidence="2">
    <location>
        <position position="54"/>
    </location>
    <ligand>
        <name>Zn(2+)</name>
        <dbReference type="ChEBI" id="CHEBI:29105"/>
    </ligand>
</feature>
<feature type="binding site" evidence="2">
    <location>
        <position position="70"/>
    </location>
    <ligand>
        <name>Zn(2+)</name>
        <dbReference type="ChEBI" id="CHEBI:29105"/>
    </ligand>
</feature>
<feature type="binding site" evidence="2">
    <location>
        <position position="73"/>
    </location>
    <ligand>
        <name>Zn(2+)</name>
        <dbReference type="ChEBI" id="CHEBI:29105"/>
    </ligand>
</feature>
<sequence length="315" mass="35945">MSLMNWFEDKRRFGGLIGAFIEKATKGYILNERERDKYIKIDTTKGLWTRCDSCENMLYVRFLKQNKRICEECGYHLQMSSIERIELLIDHGTWQPMYEDMVARDVLKFSDEDSYKNRVIFYQKRTGLTDAIQTGIGKLNKNLVALGVMDFQFMGGSMGSVVGEKITRLIEYAFKESLPLIIVCSSGGARMQEGTLSLMQMAKITSLLQFYQVRKKLFYIAILTYPTTGGVTASFGMLGDIIIAEPKAYIAFAGKRVIEQTLRQKIPDGFQVAESLFYSGLLDLIVPRTFLKGVLGEIFELYSLGVYKESNSYLF</sequence>
<dbReference type="EC" id="2.1.3.15" evidence="2"/>
<dbReference type="EMBL" id="X59787">
    <property type="protein sequence ID" value="CAA42449.1"/>
    <property type="molecule type" value="Genomic_DNA"/>
</dbReference>
<dbReference type="EMBL" id="AB066207">
    <property type="protein sequence ID" value="BAB62087.1"/>
    <property type="molecule type" value="Genomic_DNA"/>
</dbReference>
<dbReference type="EMBL" id="AP005672">
    <property type="protein sequence ID" value="BAC85043.1"/>
    <property type="molecule type" value="Genomic_DNA"/>
</dbReference>
<dbReference type="PIR" id="S22316">
    <property type="entry name" value="S22316"/>
</dbReference>
<dbReference type="RefSeq" id="NP_904193.1">
    <property type="nucleotide sequence ID" value="NC_005087.1"/>
</dbReference>
<dbReference type="SMR" id="Q00761"/>
<dbReference type="FunCoup" id="Q00761">
    <property type="interactions" value="383"/>
</dbReference>
<dbReference type="STRING" id="3218.Q00761"/>
<dbReference type="GeneID" id="2546800"/>
<dbReference type="KEGG" id="ppp:2546800"/>
<dbReference type="InParanoid" id="Q00761"/>
<dbReference type="OrthoDB" id="1878804at2759"/>
<dbReference type="UniPathway" id="UPA00655">
    <property type="reaction ID" value="UER00711"/>
</dbReference>
<dbReference type="Proteomes" id="UP000006727">
    <property type="component" value="Chloroplast"/>
</dbReference>
<dbReference type="GO" id="GO:0009317">
    <property type="term" value="C:acetyl-CoA carboxylase complex"/>
    <property type="evidence" value="ECO:0007669"/>
    <property type="project" value="InterPro"/>
</dbReference>
<dbReference type="GO" id="GO:0009570">
    <property type="term" value="C:chloroplast stroma"/>
    <property type="evidence" value="ECO:0007669"/>
    <property type="project" value="UniProtKB-SubCell"/>
</dbReference>
<dbReference type="GO" id="GO:0003989">
    <property type="term" value="F:acetyl-CoA carboxylase activity"/>
    <property type="evidence" value="ECO:0007669"/>
    <property type="project" value="InterPro"/>
</dbReference>
<dbReference type="GO" id="GO:0005524">
    <property type="term" value="F:ATP binding"/>
    <property type="evidence" value="ECO:0007669"/>
    <property type="project" value="UniProtKB-KW"/>
</dbReference>
<dbReference type="GO" id="GO:0016743">
    <property type="term" value="F:carboxyl- or carbamoyltransferase activity"/>
    <property type="evidence" value="ECO:0007669"/>
    <property type="project" value="UniProtKB-UniRule"/>
</dbReference>
<dbReference type="GO" id="GO:0008270">
    <property type="term" value="F:zinc ion binding"/>
    <property type="evidence" value="ECO:0007669"/>
    <property type="project" value="UniProtKB-UniRule"/>
</dbReference>
<dbReference type="GO" id="GO:0006633">
    <property type="term" value="P:fatty acid biosynthetic process"/>
    <property type="evidence" value="ECO:0000318"/>
    <property type="project" value="GO_Central"/>
</dbReference>
<dbReference type="GO" id="GO:2001295">
    <property type="term" value="P:malonyl-CoA biosynthetic process"/>
    <property type="evidence" value="ECO:0007669"/>
    <property type="project" value="UniProtKB-UniRule"/>
</dbReference>
<dbReference type="Gene3D" id="3.90.226.10">
    <property type="entry name" value="2-enoyl-CoA Hydratase, Chain A, domain 1"/>
    <property type="match status" value="1"/>
</dbReference>
<dbReference type="HAMAP" id="MF_01395">
    <property type="entry name" value="AcetylCoA_CT_beta"/>
    <property type="match status" value="1"/>
</dbReference>
<dbReference type="InterPro" id="IPR034733">
    <property type="entry name" value="AcCoA_carboxyl_beta"/>
</dbReference>
<dbReference type="InterPro" id="IPR000438">
    <property type="entry name" value="Acetyl_CoA_COase_Trfase_b_su"/>
</dbReference>
<dbReference type="InterPro" id="IPR029045">
    <property type="entry name" value="ClpP/crotonase-like_dom_sf"/>
</dbReference>
<dbReference type="InterPro" id="IPR011762">
    <property type="entry name" value="COA_CT_N"/>
</dbReference>
<dbReference type="NCBIfam" id="TIGR00515">
    <property type="entry name" value="accD"/>
    <property type="match status" value="1"/>
</dbReference>
<dbReference type="PANTHER" id="PTHR42995">
    <property type="entry name" value="ACETYL-COENZYME A CARBOXYLASE CARBOXYL TRANSFERASE SUBUNIT BETA, CHLOROPLASTIC"/>
    <property type="match status" value="1"/>
</dbReference>
<dbReference type="PANTHER" id="PTHR42995:SF5">
    <property type="entry name" value="ACETYL-COENZYME A CARBOXYLASE CARBOXYL TRANSFERASE SUBUNIT BETA, CHLOROPLASTIC"/>
    <property type="match status" value="1"/>
</dbReference>
<dbReference type="Pfam" id="PF01039">
    <property type="entry name" value="Carboxyl_trans"/>
    <property type="match status" value="1"/>
</dbReference>
<dbReference type="PRINTS" id="PR01070">
    <property type="entry name" value="ACCCTRFRASEB"/>
</dbReference>
<dbReference type="SUPFAM" id="SSF52096">
    <property type="entry name" value="ClpP/crotonase"/>
    <property type="match status" value="1"/>
</dbReference>
<dbReference type="PROSITE" id="PS50980">
    <property type="entry name" value="COA_CT_NTER"/>
    <property type="match status" value="1"/>
</dbReference>
<gene>
    <name evidence="2" type="primary">accD</name>
    <name type="synonym">ycf11</name>
    <name type="synonym">zfpA</name>
</gene>
<proteinExistence type="inferred from homology"/>
<name>ACCD_PHYPA</name>